<sequence>MALRIEDKKAIVAEVAEQVSSALSAAVADYRGLTVNEMTSLRKQARESGVYLRVVRNNLARLAIKGTEFECLADALKGPLVLALSKDEPGAAAKLFKNFQKDHNAFEVKNLAMSGELFGPEKLDDFAKLPTREEALATLLNVMQAPVTKFVRTLNEIPSQAVRVFAAVGDSK</sequence>
<name>RL10_FRAT1</name>
<protein>
    <recommendedName>
        <fullName evidence="1">Large ribosomal subunit protein uL10</fullName>
    </recommendedName>
    <alternativeName>
        <fullName evidence="2">50S ribosomal protein L10</fullName>
    </alternativeName>
</protein>
<keyword id="KW-0687">Ribonucleoprotein</keyword>
<keyword id="KW-0689">Ribosomal protein</keyword>
<keyword id="KW-0694">RNA-binding</keyword>
<keyword id="KW-0699">rRNA-binding</keyword>
<proteinExistence type="inferred from homology"/>
<reference key="1">
    <citation type="journal article" date="2007" name="PLoS ONE">
        <title>Genome sequencing shows that European isolates of Francisella tularensis subspecies tularensis are almost identical to US laboratory strain Schu S4.</title>
        <authorList>
            <person name="Chaudhuri R.R."/>
            <person name="Ren C.-P."/>
            <person name="Desmond L."/>
            <person name="Vincent G.A."/>
            <person name="Silman N.J."/>
            <person name="Brehm J.K."/>
            <person name="Elmore M.J."/>
            <person name="Hudson M.J."/>
            <person name="Forsman M."/>
            <person name="Isherwood K.E."/>
            <person name="Gurycova D."/>
            <person name="Minton N.P."/>
            <person name="Titball R.W."/>
            <person name="Pallen M.J."/>
            <person name="Vipond R."/>
        </authorList>
    </citation>
    <scope>NUCLEOTIDE SEQUENCE [LARGE SCALE GENOMIC DNA]</scope>
    <source>
        <strain>FSC 198</strain>
    </source>
</reference>
<organism>
    <name type="scientific">Francisella tularensis subsp. tularensis (strain FSC 198)</name>
    <dbReference type="NCBI Taxonomy" id="393115"/>
    <lineage>
        <taxon>Bacteria</taxon>
        <taxon>Pseudomonadati</taxon>
        <taxon>Pseudomonadota</taxon>
        <taxon>Gammaproteobacteria</taxon>
        <taxon>Thiotrichales</taxon>
        <taxon>Francisellaceae</taxon>
        <taxon>Francisella</taxon>
    </lineage>
</organism>
<evidence type="ECO:0000255" key="1">
    <source>
        <dbReference type="HAMAP-Rule" id="MF_00362"/>
    </source>
</evidence>
<evidence type="ECO:0000305" key="2"/>
<accession>Q14JT7</accession>
<feature type="chain" id="PRO_1000005499" description="Large ribosomal subunit protein uL10">
    <location>
        <begin position="1"/>
        <end position="172"/>
    </location>
</feature>
<dbReference type="EMBL" id="AM286280">
    <property type="protein sequence ID" value="CAL08158.1"/>
    <property type="molecule type" value="Genomic_DNA"/>
</dbReference>
<dbReference type="RefSeq" id="WP_003023073.1">
    <property type="nucleotide sequence ID" value="NC_008245.1"/>
</dbReference>
<dbReference type="SMR" id="Q14JT7"/>
<dbReference type="GeneID" id="75264698"/>
<dbReference type="KEGG" id="ftf:FTF0142"/>
<dbReference type="HOGENOM" id="CLU_092227_0_1_6"/>
<dbReference type="GO" id="GO:1990904">
    <property type="term" value="C:ribonucleoprotein complex"/>
    <property type="evidence" value="ECO:0007669"/>
    <property type="project" value="UniProtKB-KW"/>
</dbReference>
<dbReference type="GO" id="GO:0005840">
    <property type="term" value="C:ribosome"/>
    <property type="evidence" value="ECO:0007669"/>
    <property type="project" value="UniProtKB-KW"/>
</dbReference>
<dbReference type="GO" id="GO:0070180">
    <property type="term" value="F:large ribosomal subunit rRNA binding"/>
    <property type="evidence" value="ECO:0007669"/>
    <property type="project" value="UniProtKB-UniRule"/>
</dbReference>
<dbReference type="GO" id="GO:0006412">
    <property type="term" value="P:translation"/>
    <property type="evidence" value="ECO:0007669"/>
    <property type="project" value="UniProtKB-UniRule"/>
</dbReference>
<dbReference type="CDD" id="cd05797">
    <property type="entry name" value="Ribosomal_L10"/>
    <property type="match status" value="1"/>
</dbReference>
<dbReference type="Gene3D" id="3.30.70.1730">
    <property type="match status" value="1"/>
</dbReference>
<dbReference type="Gene3D" id="6.10.250.290">
    <property type="match status" value="1"/>
</dbReference>
<dbReference type="HAMAP" id="MF_00362">
    <property type="entry name" value="Ribosomal_uL10"/>
    <property type="match status" value="1"/>
</dbReference>
<dbReference type="InterPro" id="IPR001790">
    <property type="entry name" value="Ribosomal_uL10"/>
</dbReference>
<dbReference type="InterPro" id="IPR043141">
    <property type="entry name" value="Ribosomal_uL10-like_sf"/>
</dbReference>
<dbReference type="InterPro" id="IPR022973">
    <property type="entry name" value="Ribosomal_uL10_bac"/>
</dbReference>
<dbReference type="InterPro" id="IPR047865">
    <property type="entry name" value="Ribosomal_uL10_bac_type"/>
</dbReference>
<dbReference type="NCBIfam" id="NF000955">
    <property type="entry name" value="PRK00099.1-1"/>
    <property type="match status" value="1"/>
</dbReference>
<dbReference type="PANTHER" id="PTHR11560">
    <property type="entry name" value="39S RIBOSOMAL PROTEIN L10, MITOCHONDRIAL"/>
    <property type="match status" value="1"/>
</dbReference>
<dbReference type="Pfam" id="PF00466">
    <property type="entry name" value="Ribosomal_L10"/>
    <property type="match status" value="1"/>
</dbReference>
<dbReference type="SUPFAM" id="SSF160369">
    <property type="entry name" value="Ribosomal protein L10-like"/>
    <property type="match status" value="1"/>
</dbReference>
<gene>
    <name evidence="1" type="primary">rplJ</name>
    <name type="ordered locus">FTF0142</name>
</gene>
<comment type="function">
    <text evidence="1">Forms part of the ribosomal stalk, playing a central role in the interaction of the ribosome with GTP-bound translation factors.</text>
</comment>
<comment type="subunit">
    <text evidence="1">Part of the ribosomal stalk of the 50S ribosomal subunit. The N-terminus interacts with L11 and the large rRNA to form the base of the stalk. The C-terminus forms an elongated spine to which L12 dimers bind in a sequential fashion forming a multimeric L10(L12)X complex.</text>
</comment>
<comment type="similarity">
    <text evidence="1">Belongs to the universal ribosomal protein uL10 family.</text>
</comment>